<gene>
    <name type="primary">taf1b</name>
</gene>
<feature type="chain" id="PRO_0000416873" description="TATA box-binding protein-associated factor RNA polymerase I subunit B">
    <location>
        <begin position="1"/>
        <end position="596"/>
    </location>
</feature>
<feature type="zinc finger region" description="RRN7-type">
    <location>
        <begin position="4"/>
        <end position="39"/>
    </location>
</feature>
<feature type="region of interest" description="B-reader" evidence="1">
    <location>
        <begin position="40"/>
        <end position="69"/>
    </location>
</feature>
<feature type="region of interest" description="B-linker" evidence="1">
    <location>
        <begin position="70"/>
        <end position="74"/>
    </location>
</feature>
<feature type="region of interest" description="N-terminal cyclin fold" evidence="1">
    <location>
        <begin position="75"/>
        <end position="263"/>
    </location>
</feature>
<feature type="region of interest" description="C-terminal cyclin fold" evidence="1">
    <location>
        <begin position="264"/>
        <end position="374"/>
    </location>
</feature>
<feature type="region of interest" description="Disordered" evidence="2">
    <location>
        <begin position="575"/>
        <end position="596"/>
    </location>
</feature>
<feature type="compositionally biased region" description="Basic and acidic residues" evidence="2">
    <location>
        <begin position="583"/>
        <end position="596"/>
    </location>
</feature>
<feature type="binding site" evidence="1">
    <location>
        <position position="13"/>
    </location>
    <ligand>
        <name>Zn(2+)</name>
        <dbReference type="ChEBI" id="CHEBI:29105"/>
    </ligand>
</feature>
<feature type="binding site" evidence="1">
    <location>
        <position position="16"/>
    </location>
    <ligand>
        <name>Zn(2+)</name>
        <dbReference type="ChEBI" id="CHEBI:29105"/>
    </ligand>
</feature>
<feature type="binding site" evidence="1">
    <location>
        <position position="31"/>
    </location>
    <ligand>
        <name>Zn(2+)</name>
        <dbReference type="ChEBI" id="CHEBI:29105"/>
    </ligand>
</feature>
<feature type="binding site" evidence="1">
    <location>
        <position position="34"/>
    </location>
    <ligand>
        <name>Zn(2+)</name>
        <dbReference type="ChEBI" id="CHEBI:29105"/>
    </ligand>
</feature>
<reference key="1">
    <citation type="journal article" date="2010" name="Science">
        <title>The genome of the Western clawed frog Xenopus tropicalis.</title>
        <authorList>
            <person name="Hellsten U."/>
            <person name="Harland R.M."/>
            <person name="Gilchrist M.J."/>
            <person name="Hendrix D."/>
            <person name="Jurka J."/>
            <person name="Kapitonov V."/>
            <person name="Ovcharenko I."/>
            <person name="Putnam N.H."/>
            <person name="Shu S."/>
            <person name="Taher L."/>
            <person name="Blitz I.L."/>
            <person name="Blumberg B."/>
            <person name="Dichmann D.S."/>
            <person name="Dubchak I."/>
            <person name="Amaya E."/>
            <person name="Detter J.C."/>
            <person name="Fletcher R."/>
            <person name="Gerhard D.S."/>
            <person name="Goodstein D."/>
            <person name="Graves T."/>
            <person name="Grigoriev I.V."/>
            <person name="Grimwood J."/>
            <person name="Kawashima T."/>
            <person name="Lindquist E."/>
            <person name="Lucas S.M."/>
            <person name="Mead P.E."/>
            <person name="Mitros T."/>
            <person name="Ogino H."/>
            <person name="Ohta Y."/>
            <person name="Poliakov A.V."/>
            <person name="Pollet N."/>
            <person name="Robert J."/>
            <person name="Salamov A."/>
            <person name="Sater A.K."/>
            <person name="Schmutz J."/>
            <person name="Terry A."/>
            <person name="Vize P.D."/>
            <person name="Warren W.C."/>
            <person name="Wells D."/>
            <person name="Wills A."/>
            <person name="Wilson R.K."/>
            <person name="Zimmerman L.B."/>
            <person name="Zorn A.M."/>
            <person name="Grainger R."/>
            <person name="Grammer T."/>
            <person name="Khokha M.K."/>
            <person name="Richardson P.M."/>
            <person name="Rokhsar D.S."/>
        </authorList>
    </citation>
    <scope>NUCLEOTIDE SEQUENCE [LARGE SCALE GENOMIC DNA]</scope>
</reference>
<organism>
    <name type="scientific">Xenopus tropicalis</name>
    <name type="common">Western clawed frog</name>
    <name type="synonym">Silurana tropicalis</name>
    <dbReference type="NCBI Taxonomy" id="8364"/>
    <lineage>
        <taxon>Eukaryota</taxon>
        <taxon>Metazoa</taxon>
        <taxon>Chordata</taxon>
        <taxon>Craniata</taxon>
        <taxon>Vertebrata</taxon>
        <taxon>Euteleostomi</taxon>
        <taxon>Amphibia</taxon>
        <taxon>Batrachia</taxon>
        <taxon>Anura</taxon>
        <taxon>Pipoidea</taxon>
        <taxon>Pipidae</taxon>
        <taxon>Xenopodinae</taxon>
        <taxon>Xenopus</taxon>
        <taxon>Silurana</taxon>
    </lineage>
</organism>
<keyword id="KW-0238">DNA-binding</keyword>
<keyword id="KW-0479">Metal-binding</keyword>
<keyword id="KW-0539">Nucleus</keyword>
<keyword id="KW-1185">Reference proteome</keyword>
<keyword id="KW-0804">Transcription</keyword>
<keyword id="KW-0805">Transcription regulation</keyword>
<keyword id="KW-0862">Zinc</keyword>
<keyword id="KW-0863">Zinc-finger</keyword>
<dbReference type="EMBL" id="AAMC01085723">
    <property type="status" value="NOT_ANNOTATED_CDS"/>
    <property type="molecule type" value="Genomic_DNA"/>
</dbReference>
<dbReference type="EMBL" id="AAMC01085724">
    <property type="status" value="NOT_ANNOTATED_CDS"/>
    <property type="molecule type" value="Genomic_DNA"/>
</dbReference>
<dbReference type="EMBL" id="AAMC01085725">
    <property type="status" value="NOT_ANNOTATED_CDS"/>
    <property type="molecule type" value="Genomic_DNA"/>
</dbReference>
<dbReference type="EMBL" id="AAMC01085726">
    <property type="status" value="NOT_ANNOTATED_CDS"/>
    <property type="molecule type" value="Genomic_DNA"/>
</dbReference>
<dbReference type="EMBL" id="AAMC01085727">
    <property type="status" value="NOT_ANNOTATED_CDS"/>
    <property type="molecule type" value="Genomic_DNA"/>
</dbReference>
<dbReference type="EMBL" id="AAMC01085728">
    <property type="status" value="NOT_ANNOTATED_CDS"/>
    <property type="molecule type" value="Genomic_DNA"/>
</dbReference>
<dbReference type="RefSeq" id="XP_002938934.1">
    <property type="nucleotide sequence ID" value="XM_002938888.5"/>
</dbReference>
<dbReference type="FunCoup" id="F7BLM1">
    <property type="interactions" value="2769"/>
</dbReference>
<dbReference type="STRING" id="8364.ENSXETP00000039733"/>
<dbReference type="PaxDb" id="8364-ENSXETP00000015280"/>
<dbReference type="GeneID" id="100379921"/>
<dbReference type="KEGG" id="xtr:100379921"/>
<dbReference type="AGR" id="Xenbase:XB-GENE-992275"/>
<dbReference type="CTD" id="9014"/>
<dbReference type="Xenbase" id="XB-GENE-992275">
    <property type="gene designation" value="taf1b"/>
</dbReference>
<dbReference type="eggNOG" id="ENOG502QVGU">
    <property type="taxonomic scope" value="Eukaryota"/>
</dbReference>
<dbReference type="HOGENOM" id="CLU_032815_0_0_1"/>
<dbReference type="InParanoid" id="F7BLM1"/>
<dbReference type="OMA" id="SFRFCWG"/>
<dbReference type="OrthoDB" id="10069252at2759"/>
<dbReference type="PhylomeDB" id="F7BLM1"/>
<dbReference type="TreeFam" id="TF324353"/>
<dbReference type="Reactome" id="R-XTR-73762">
    <property type="pathway name" value="RNA Polymerase I Transcription Initiation"/>
</dbReference>
<dbReference type="Reactome" id="R-XTR-73772">
    <property type="pathway name" value="RNA Polymerase I Promoter Escape"/>
</dbReference>
<dbReference type="Reactome" id="R-XTR-73863">
    <property type="pathway name" value="RNA Polymerase I Transcription Termination"/>
</dbReference>
<dbReference type="Proteomes" id="UP000008143">
    <property type="component" value="Chromosome 5"/>
</dbReference>
<dbReference type="Bgee" id="ENSXETG00000007011">
    <property type="expression patterns" value="Expressed in 4-cell stage embryo and 12 other cell types or tissues"/>
</dbReference>
<dbReference type="GO" id="GO:0070860">
    <property type="term" value="C:RNA polymerase I core factor complex"/>
    <property type="evidence" value="ECO:0007669"/>
    <property type="project" value="InterPro"/>
</dbReference>
<dbReference type="GO" id="GO:0001164">
    <property type="term" value="F:RNA polymerase I core promoter sequence-specific DNA binding"/>
    <property type="evidence" value="ECO:0000250"/>
    <property type="project" value="UniProtKB"/>
</dbReference>
<dbReference type="GO" id="GO:0008270">
    <property type="term" value="F:zinc ion binding"/>
    <property type="evidence" value="ECO:0007669"/>
    <property type="project" value="UniProtKB-KW"/>
</dbReference>
<dbReference type="GO" id="GO:0001188">
    <property type="term" value="P:RNA polymerase I preinitiation complex assembly"/>
    <property type="evidence" value="ECO:0000250"/>
    <property type="project" value="UniProtKB"/>
</dbReference>
<dbReference type="InterPro" id="IPR048538">
    <property type="entry name" value="Rrn7_cyclin_C"/>
</dbReference>
<dbReference type="InterPro" id="IPR048540">
    <property type="entry name" value="Rrn7_cyclin_N"/>
</dbReference>
<dbReference type="InterPro" id="IPR033599">
    <property type="entry name" value="TAF1B/Rrn7"/>
</dbReference>
<dbReference type="InterPro" id="IPR021752">
    <property type="entry name" value="TF_Rrn7_Zf"/>
</dbReference>
<dbReference type="PANTHER" id="PTHR31576">
    <property type="entry name" value="TATA BOX-BINDING PROTEIN-ASSOCIATED FACTOR RNA POLYMERASE I SUBUNIT B"/>
    <property type="match status" value="1"/>
</dbReference>
<dbReference type="PANTHER" id="PTHR31576:SF2">
    <property type="entry name" value="TATA BOX-BINDING PROTEIN-ASSOCIATED FACTOR RNA POLYMERASE I SUBUNIT B"/>
    <property type="match status" value="1"/>
</dbReference>
<dbReference type="Pfam" id="PF20645">
    <property type="entry name" value="Rrn7_cyclin_C"/>
    <property type="match status" value="1"/>
</dbReference>
<dbReference type="Pfam" id="PF20644">
    <property type="entry name" value="Rrn7_cyclin_N"/>
    <property type="match status" value="1"/>
</dbReference>
<dbReference type="Pfam" id="PF11781">
    <property type="entry name" value="Zn_ribbon_RRN7"/>
    <property type="match status" value="1"/>
</dbReference>
<evidence type="ECO:0000250" key="1"/>
<evidence type="ECO:0000256" key="2">
    <source>
        <dbReference type="SAM" id="MobiDB-lite"/>
    </source>
</evidence>
<evidence type="ECO:0000305" key="3"/>
<sequence length="596" mass="69304">MEEEDARGYNKPCPQCSEVNWAISDEGTFYCKSCHTVIEKTREVDDTEVFSTHGKLQSISRGLRKKRKLEKGWEWYVCEGFQFILIKQAEALQALGVAPQIKDEILCTFWRRYLQKTNQAYVKRPVYRSVLTCRDSDSSATEVDSDLEAFSIGTSSVSDGYTSDASGRLSLPTEDIPSASESAVSVHSGSVDGLSHVKMRKNFKPWNYVKMTMPMTLAFCYLALLWLRASITLSDLLRFVFEKHIPYINAHQYLPEEIKVYGHDVRIFRMQALPVYNDILSKAYELGAFLDLPQFPPITKNCYLHPSVLCMKYLIEANLPDELQQWTCQVAEKTGIDDFHRLTFDPACKRASHIRYDVQAVALIILVLKLLFALDDNTEWQLSKFAERMNQSNKEKTVFDLQSWYQTVRQCYEKAQQKLEEEYGRFMWKSDCPLYYSQTTKSLLQKRKQMSENLQRQFSKLAGAAPNTGKQGPSSFLFKWEEQNTDTISFHGHSLQAVLHQGKKPPTPINTHYWLNSLRKCKTRICQHSELYEESNFPRSYHFMVCLFAFLLRVEHCVIHHEVGLIEELFFQEKKNKRKQKPKKQEMTDFREVPPD</sequence>
<proteinExistence type="inferred from homology"/>
<protein>
    <recommendedName>
        <fullName>TATA box-binding protein-associated factor RNA polymerase I subunit B</fullName>
    </recommendedName>
    <alternativeName>
        <fullName>RNA polymerase I-specific TBP-associated factor 63 kDa</fullName>
        <shortName>TAFI63</shortName>
    </alternativeName>
    <alternativeName>
        <fullName>TATA box-binding protein-associated factor 1B</fullName>
        <shortName>TBP-associated factor 1B</shortName>
    </alternativeName>
</protein>
<name>TAF1B_XENTR</name>
<accession>F7BLM1</accession>
<comment type="function">
    <text evidence="1">Component of RNA polymerase I core factor complex that acts as a GTF2B/TFIIB-like factor and plays a key role in multiple steps during transcription initiation such as pre-initiation complex (PIC) assembly and postpolymerase recruitment events in polymerase I (Pol I) transcription. Binds rDNA promoters and plays a role in Pol I recruitment (By similarity).</text>
</comment>
<comment type="subcellular location">
    <subcellularLocation>
        <location evidence="1">Nucleus</location>
        <location evidence="1">Nucleolus</location>
    </subcellularLocation>
</comment>
<comment type="domain">
    <text evidence="1">Although it shares weak sequence similarity with GTF2B/TFIIB, displays a similar subdomain organization as GTF2B/TFIIB, with a N-terminal zinc finger, a connecting region (composed of B-reader and B-linker regions), followed by 2 cyclin folds. The RRN7-type zinc finger plays an essential postrecruitment role in Pol I transcription at a step preceding synthesis of the first 40 nucleotides (By similarity).</text>
</comment>
<comment type="similarity">
    <text evidence="3">Belongs to the RRN7/TAF1B family.</text>
</comment>